<organism>
    <name type="scientific">Methanococcus maripaludis (strain C5 / ATCC BAA-1333)</name>
    <dbReference type="NCBI Taxonomy" id="402880"/>
    <lineage>
        <taxon>Archaea</taxon>
        <taxon>Methanobacteriati</taxon>
        <taxon>Methanobacteriota</taxon>
        <taxon>Methanomada group</taxon>
        <taxon>Methanococci</taxon>
        <taxon>Methanococcales</taxon>
        <taxon>Methanococcaceae</taxon>
        <taxon>Methanococcus</taxon>
    </lineage>
</organism>
<protein>
    <recommendedName>
        <fullName evidence="1">Ribonuclease Z</fullName>
        <shortName evidence="1">RNase Z</shortName>
        <ecNumber evidence="1">3.1.26.11</ecNumber>
    </recommendedName>
    <alternativeName>
        <fullName evidence="1">tRNA 3 endonuclease</fullName>
    </alternativeName>
    <alternativeName>
        <fullName evidence="1">tRNase Z</fullName>
    </alternativeName>
</protein>
<evidence type="ECO:0000255" key="1">
    <source>
        <dbReference type="HAMAP-Rule" id="MF_01818"/>
    </source>
</evidence>
<reference key="1">
    <citation type="submission" date="2007-03" db="EMBL/GenBank/DDBJ databases">
        <title>Complete sequence of chromosome of Methanococcus maripaludis C5.</title>
        <authorList>
            <consortium name="US DOE Joint Genome Institute"/>
            <person name="Copeland A."/>
            <person name="Lucas S."/>
            <person name="Lapidus A."/>
            <person name="Barry K."/>
            <person name="Glavina del Rio T."/>
            <person name="Dalin E."/>
            <person name="Tice H."/>
            <person name="Pitluck S."/>
            <person name="Chertkov O."/>
            <person name="Brettin T."/>
            <person name="Bruce D."/>
            <person name="Han C."/>
            <person name="Detter J.C."/>
            <person name="Schmutz J."/>
            <person name="Larimer F."/>
            <person name="Land M."/>
            <person name="Hauser L."/>
            <person name="Kyrpides N."/>
            <person name="Mikhailova N."/>
            <person name="Sieprawska-Lupa M."/>
            <person name="Whitman W.B."/>
            <person name="Richardson P."/>
        </authorList>
    </citation>
    <scope>NUCLEOTIDE SEQUENCE [LARGE SCALE GENOMIC DNA]</scope>
    <source>
        <strain>C5 / ATCC BAA-1333</strain>
    </source>
</reference>
<dbReference type="EC" id="3.1.26.11" evidence="1"/>
<dbReference type="EMBL" id="CP000609">
    <property type="protein sequence ID" value="ABO35023.1"/>
    <property type="molecule type" value="Genomic_DNA"/>
</dbReference>
<dbReference type="RefSeq" id="WP_011868477.1">
    <property type="nucleotide sequence ID" value="NC_009135.1"/>
</dbReference>
<dbReference type="SMR" id="A4FXT9"/>
<dbReference type="STRING" id="402880.MmarC5_0713"/>
<dbReference type="GeneID" id="4928694"/>
<dbReference type="KEGG" id="mmq:MmarC5_0713"/>
<dbReference type="eggNOG" id="arCOG00501">
    <property type="taxonomic scope" value="Archaea"/>
</dbReference>
<dbReference type="HOGENOM" id="CLU_031317_2_1_2"/>
<dbReference type="OrthoDB" id="85118at2157"/>
<dbReference type="Proteomes" id="UP000000253">
    <property type="component" value="Chromosome"/>
</dbReference>
<dbReference type="GO" id="GO:0042781">
    <property type="term" value="F:3'-tRNA processing endoribonuclease activity"/>
    <property type="evidence" value="ECO:0007669"/>
    <property type="project" value="UniProtKB-UniRule"/>
</dbReference>
<dbReference type="GO" id="GO:0008270">
    <property type="term" value="F:zinc ion binding"/>
    <property type="evidence" value="ECO:0007669"/>
    <property type="project" value="UniProtKB-UniRule"/>
</dbReference>
<dbReference type="CDD" id="cd07717">
    <property type="entry name" value="RNaseZ_ZiPD-like_MBL-fold"/>
    <property type="match status" value="1"/>
</dbReference>
<dbReference type="Gene3D" id="3.60.15.10">
    <property type="entry name" value="Ribonuclease Z/Hydroxyacylglutathione hydrolase-like"/>
    <property type="match status" value="1"/>
</dbReference>
<dbReference type="HAMAP" id="MF_01818">
    <property type="entry name" value="RNase_Z_BN"/>
    <property type="match status" value="1"/>
</dbReference>
<dbReference type="InterPro" id="IPR036866">
    <property type="entry name" value="RibonucZ/Hydroxyglut_hydro"/>
</dbReference>
<dbReference type="InterPro" id="IPR013471">
    <property type="entry name" value="RNase_Z/BN"/>
</dbReference>
<dbReference type="InterPro" id="IPR027794">
    <property type="entry name" value="tRNase_Z_dom"/>
</dbReference>
<dbReference type="NCBIfam" id="NF000801">
    <property type="entry name" value="PRK00055.1-3"/>
    <property type="match status" value="1"/>
</dbReference>
<dbReference type="NCBIfam" id="TIGR02651">
    <property type="entry name" value="RNase_Z"/>
    <property type="match status" value="1"/>
</dbReference>
<dbReference type="PANTHER" id="PTHR46018">
    <property type="entry name" value="ZINC PHOSPHODIESTERASE ELAC PROTEIN 1"/>
    <property type="match status" value="1"/>
</dbReference>
<dbReference type="PANTHER" id="PTHR46018:SF2">
    <property type="entry name" value="ZINC PHOSPHODIESTERASE ELAC PROTEIN 1"/>
    <property type="match status" value="1"/>
</dbReference>
<dbReference type="Pfam" id="PF13691">
    <property type="entry name" value="Lactamase_B_4"/>
    <property type="match status" value="1"/>
</dbReference>
<dbReference type="SUPFAM" id="SSF56281">
    <property type="entry name" value="Metallo-hydrolase/oxidoreductase"/>
    <property type="match status" value="1"/>
</dbReference>
<accession>A4FXT9</accession>
<name>RNZ_METM5</name>
<keyword id="KW-0255">Endonuclease</keyword>
<keyword id="KW-0378">Hydrolase</keyword>
<keyword id="KW-0479">Metal-binding</keyword>
<keyword id="KW-0540">Nuclease</keyword>
<keyword id="KW-0819">tRNA processing</keyword>
<keyword id="KW-0862">Zinc</keyword>
<proteinExistence type="inferred from homology"/>
<comment type="function">
    <text evidence="1">Zinc phosphodiesterase, which displays some tRNA 3'-processing endonuclease activity. Probably involved in tRNA maturation, by removing a 3'-trailer from precursor tRNA.</text>
</comment>
<comment type="catalytic activity">
    <reaction evidence="1">
        <text>Endonucleolytic cleavage of RNA, removing extra 3' nucleotides from tRNA precursor, generating 3' termini of tRNAs. A 3'-hydroxy group is left at the tRNA terminus and a 5'-phosphoryl group is left at the trailer molecule.</text>
        <dbReference type="EC" id="3.1.26.11"/>
    </reaction>
</comment>
<comment type="cofactor">
    <cofactor evidence="1">
        <name>Zn(2+)</name>
        <dbReference type="ChEBI" id="CHEBI:29105"/>
    </cofactor>
    <text evidence="1">Binds 2 Zn(2+) ions.</text>
</comment>
<comment type="subunit">
    <text evidence="1">Homodimer.</text>
</comment>
<comment type="similarity">
    <text evidence="1">Belongs to the RNase Z family.</text>
</comment>
<sequence length="314" mass="35291">MKLTFLGTGAAIPTKYRAHPSISLKFDGEIFLFDCGENTQRQIIFTDVSPMKINNIFISHLHGDHVLGIPGLLQSIAFQGRTKPLNIYGPEETAKMIKNILNVGYHSIDYPINVYEISSKTSEKIISTDNYDVFSFPVVHSVPAVAYVFRQVKKPRMDLEKVNKLGIEIGPDLKRLKDGYNVELNGKIITPEDVTLPPKKGICVGYSGDTIPLNEFADFLKELKCTILIHEATFDKTMDKNAKETLHSTVHDALNIAKRSGANTVILTHISARYDELSAFEKDVVEFKVEHPDLHVLIAEDLMEYSLKGKWVKM</sequence>
<gene>
    <name evidence="1" type="primary">rnz</name>
    <name type="ordered locus">MmarC5_0713</name>
</gene>
<feature type="chain" id="PRO_1000070298" description="Ribonuclease Z">
    <location>
        <begin position="1"/>
        <end position="314"/>
    </location>
</feature>
<feature type="active site" description="Proton acceptor" evidence="1">
    <location>
        <position position="64"/>
    </location>
</feature>
<feature type="binding site" evidence="1">
    <location>
        <position position="60"/>
    </location>
    <ligand>
        <name>Zn(2+)</name>
        <dbReference type="ChEBI" id="CHEBI:29105"/>
        <label>1</label>
        <note>catalytic</note>
    </ligand>
</feature>
<feature type="binding site" evidence="1">
    <location>
        <position position="62"/>
    </location>
    <ligand>
        <name>Zn(2+)</name>
        <dbReference type="ChEBI" id="CHEBI:29105"/>
        <label>1</label>
        <note>catalytic</note>
    </ligand>
</feature>
<feature type="binding site" evidence="1">
    <location>
        <position position="64"/>
    </location>
    <ligand>
        <name>Zn(2+)</name>
        <dbReference type="ChEBI" id="CHEBI:29105"/>
        <label>2</label>
        <note>catalytic</note>
    </ligand>
</feature>
<feature type="binding site" evidence="1">
    <location>
        <position position="65"/>
    </location>
    <ligand>
        <name>Zn(2+)</name>
        <dbReference type="ChEBI" id="CHEBI:29105"/>
        <label>2</label>
        <note>catalytic</note>
    </ligand>
</feature>
<feature type="binding site" evidence="1">
    <location>
        <position position="140"/>
    </location>
    <ligand>
        <name>Zn(2+)</name>
        <dbReference type="ChEBI" id="CHEBI:29105"/>
        <label>1</label>
        <note>catalytic</note>
    </ligand>
</feature>
<feature type="binding site" evidence="1">
    <location>
        <position position="209"/>
    </location>
    <ligand>
        <name>Zn(2+)</name>
        <dbReference type="ChEBI" id="CHEBI:29105"/>
        <label>1</label>
        <note>catalytic</note>
    </ligand>
</feature>
<feature type="binding site" evidence="1">
    <location>
        <position position="209"/>
    </location>
    <ligand>
        <name>Zn(2+)</name>
        <dbReference type="ChEBI" id="CHEBI:29105"/>
        <label>2</label>
        <note>catalytic</note>
    </ligand>
</feature>
<feature type="binding site" evidence="1">
    <location>
        <position position="269"/>
    </location>
    <ligand>
        <name>Zn(2+)</name>
        <dbReference type="ChEBI" id="CHEBI:29105"/>
        <label>2</label>
        <note>catalytic</note>
    </ligand>
</feature>